<evidence type="ECO:0000255" key="1">
    <source>
        <dbReference type="HAMAP-Rule" id="MF_01322"/>
    </source>
</evidence>
<gene>
    <name evidence="1" type="primary">rpoC</name>
    <name type="ordered locus">Mpop_4500</name>
</gene>
<protein>
    <recommendedName>
        <fullName evidence="1">DNA-directed RNA polymerase subunit beta'</fullName>
        <shortName evidence="1">RNAP subunit beta'</shortName>
        <ecNumber evidence="1">2.7.7.6</ecNumber>
    </recommendedName>
    <alternativeName>
        <fullName evidence="1">RNA polymerase subunit beta'</fullName>
    </alternativeName>
    <alternativeName>
        <fullName evidence="1">Transcriptase subunit beta'</fullName>
    </alternativeName>
</protein>
<sequence>MNQEVMNLFNQQAQPQSFDQIKISISSPEKILSWSYGEIKKPETINYRTFKPERDGLFCARIFGPIKDYECLCGKYKRMKYKGVICEKCGVEVTLARVRRDRMGHIELAAPVAHIWFLKSLPSRIGLLLDMALKDLERILYFESYVVIEPGLTPLKERQLLSEEEYLRAQEEYGEDSFTAMIGAEAIRRILQELDLEGIATALKEEIATTTSELKPKKLMKRLKIIEAFQLSGNKPEWMILTVVPVIPPDLRPLVPLDGGRFATSDLNDLYRRVINRNNRLKRLIELRAPDIIIRNEKRMLQEAVDALFDNGRRGRVITGANKRPLKSLADMLKGKQGRFRQNLLGKRVDYSGRSVIVVGPELKLHQCGLPKKMALELFKPFIYARLDAKGFSATVKQAKKLVEKEKPEVWDILDEVIREHPVMLNRAPTLHRLGIQAFEPKLIEGKAIQLHPLVCAAFNADFDGDQMAVHVPLSLEAQLEARVLMMSTNNILHPANGQPIIVPSQDIVLGLYYLSIVADGAVGEHKADDKNNPMQGVFGDIGQLEHALAAKTVSLHSKIKWRWRGLGPDGEPVSKIYDTTPGRVILSGVLPLHPKVPFDVVNKLMTKKEISAMIDTVYRHCGQKESVIFCDRIMALGFSHAFRAGISFGKDDMVVPENKWSIVDDTRALVKDYEQQYNDGLITQGEKYNKVVDAWAKCSDKLAAEMMGRISAVQKDDKGADKQVNSIYMMSHSGARGSPAQMKQLAAMRGLMAKPSGEIIETPIISNFKEGLDVLEYFNSTHGARKGLADTALKTANSGYLTRRLVDVAQDAVIRETDCGTTNGIKMRAIIDAGQVVAPLAIRILGRATAEDLVAQDGTVIVKTGETIEERHLPAINAAGIQEVKIRSVLVCQTKSGVCATCYGRDLARGTPVNMGEAVGVIAAQSIGEPGTQLTMRTFHIGGAAQIADSSFIESSFEGTIKIRNRSLAKNSDGDLIATGRSVAVVIVGPDGTERAVHRLQYGAKVRVDEGDTIKRGQRIAEWDPYTRPIVAEVDGIVGYEDLYDGQSITETTDESTGIAKRVVIDWRGSARTSDLKPAMLVLDQDGKPVKLARGSDARYFLPVDAIIGLDPGAKVKAGDVLARVSTESAKTRDITGGLPRVAELFEARRPKDAAIIAEKSGTIQFGRDYKNKRRLTLTPHDGSEAVEYLIPKGKHIHLQDGDVVELGDYIVDGNPAPHDILAIKGVEELAAYLVNEIQEVYRLQGVSINDKHIEVIVRQMLQKVEITDGGDSDILTGDQIDRTELAEYNEKLLAEGKKPIQGVPVLLGITKASLQTKSFISAASFQETTRVLTEAAVNGKVDTLEGLKENVIVGSLIPAGTGSLAADIRSIARRRDSLILQQRSAENAANAAELSELPPAAAE</sequence>
<dbReference type="EC" id="2.7.7.6" evidence="1"/>
<dbReference type="EMBL" id="CP001029">
    <property type="protein sequence ID" value="ACB82599.1"/>
    <property type="molecule type" value="Genomic_DNA"/>
</dbReference>
<dbReference type="RefSeq" id="WP_012456203.1">
    <property type="nucleotide sequence ID" value="NC_010725.1"/>
</dbReference>
<dbReference type="SMR" id="B1ZGS1"/>
<dbReference type="STRING" id="441620.Mpop_4500"/>
<dbReference type="KEGG" id="mpo:Mpop_4500"/>
<dbReference type="eggNOG" id="COG0086">
    <property type="taxonomic scope" value="Bacteria"/>
</dbReference>
<dbReference type="HOGENOM" id="CLU_000524_3_1_5"/>
<dbReference type="OrthoDB" id="9815296at2"/>
<dbReference type="Proteomes" id="UP000007136">
    <property type="component" value="Chromosome"/>
</dbReference>
<dbReference type="GO" id="GO:0000428">
    <property type="term" value="C:DNA-directed RNA polymerase complex"/>
    <property type="evidence" value="ECO:0007669"/>
    <property type="project" value="UniProtKB-KW"/>
</dbReference>
<dbReference type="GO" id="GO:0003677">
    <property type="term" value="F:DNA binding"/>
    <property type="evidence" value="ECO:0007669"/>
    <property type="project" value="UniProtKB-UniRule"/>
</dbReference>
<dbReference type="GO" id="GO:0003899">
    <property type="term" value="F:DNA-directed RNA polymerase activity"/>
    <property type="evidence" value="ECO:0007669"/>
    <property type="project" value="UniProtKB-UniRule"/>
</dbReference>
<dbReference type="GO" id="GO:0000287">
    <property type="term" value="F:magnesium ion binding"/>
    <property type="evidence" value="ECO:0007669"/>
    <property type="project" value="UniProtKB-UniRule"/>
</dbReference>
<dbReference type="GO" id="GO:0008270">
    <property type="term" value="F:zinc ion binding"/>
    <property type="evidence" value="ECO:0007669"/>
    <property type="project" value="UniProtKB-UniRule"/>
</dbReference>
<dbReference type="GO" id="GO:0006351">
    <property type="term" value="P:DNA-templated transcription"/>
    <property type="evidence" value="ECO:0007669"/>
    <property type="project" value="UniProtKB-UniRule"/>
</dbReference>
<dbReference type="CDD" id="cd02655">
    <property type="entry name" value="RNAP_beta'_C"/>
    <property type="match status" value="1"/>
</dbReference>
<dbReference type="CDD" id="cd01609">
    <property type="entry name" value="RNAP_beta'_N"/>
    <property type="match status" value="1"/>
</dbReference>
<dbReference type="Gene3D" id="1.10.132.30">
    <property type="match status" value="1"/>
</dbReference>
<dbReference type="Gene3D" id="1.10.150.390">
    <property type="match status" value="1"/>
</dbReference>
<dbReference type="Gene3D" id="1.10.1790.20">
    <property type="match status" value="1"/>
</dbReference>
<dbReference type="Gene3D" id="1.10.40.90">
    <property type="match status" value="1"/>
</dbReference>
<dbReference type="Gene3D" id="2.40.40.20">
    <property type="match status" value="1"/>
</dbReference>
<dbReference type="Gene3D" id="2.40.50.100">
    <property type="match status" value="3"/>
</dbReference>
<dbReference type="Gene3D" id="4.10.860.120">
    <property type="entry name" value="RNA polymerase II, clamp domain"/>
    <property type="match status" value="1"/>
</dbReference>
<dbReference type="Gene3D" id="1.10.274.100">
    <property type="entry name" value="RNA polymerase Rpb1, domain 3"/>
    <property type="match status" value="2"/>
</dbReference>
<dbReference type="HAMAP" id="MF_01322">
    <property type="entry name" value="RNApol_bact_RpoC"/>
    <property type="match status" value="1"/>
</dbReference>
<dbReference type="InterPro" id="IPR045867">
    <property type="entry name" value="DNA-dir_RpoC_beta_prime"/>
</dbReference>
<dbReference type="InterPro" id="IPR012754">
    <property type="entry name" value="DNA-dir_RpoC_beta_prime_bact"/>
</dbReference>
<dbReference type="InterPro" id="IPR000722">
    <property type="entry name" value="RNA_pol_asu"/>
</dbReference>
<dbReference type="InterPro" id="IPR006592">
    <property type="entry name" value="RNA_pol_N"/>
</dbReference>
<dbReference type="InterPro" id="IPR007080">
    <property type="entry name" value="RNA_pol_Rpb1_1"/>
</dbReference>
<dbReference type="InterPro" id="IPR007066">
    <property type="entry name" value="RNA_pol_Rpb1_3"/>
</dbReference>
<dbReference type="InterPro" id="IPR042102">
    <property type="entry name" value="RNA_pol_Rpb1_3_sf"/>
</dbReference>
<dbReference type="InterPro" id="IPR007083">
    <property type="entry name" value="RNA_pol_Rpb1_4"/>
</dbReference>
<dbReference type="InterPro" id="IPR007081">
    <property type="entry name" value="RNA_pol_Rpb1_5"/>
</dbReference>
<dbReference type="InterPro" id="IPR044893">
    <property type="entry name" value="RNA_pol_Rpb1_clamp_domain"/>
</dbReference>
<dbReference type="InterPro" id="IPR038120">
    <property type="entry name" value="Rpb1_funnel_sf"/>
</dbReference>
<dbReference type="NCBIfam" id="TIGR02386">
    <property type="entry name" value="rpoC_TIGR"/>
    <property type="match status" value="1"/>
</dbReference>
<dbReference type="PANTHER" id="PTHR19376">
    <property type="entry name" value="DNA-DIRECTED RNA POLYMERASE"/>
    <property type="match status" value="1"/>
</dbReference>
<dbReference type="PANTHER" id="PTHR19376:SF54">
    <property type="entry name" value="DNA-DIRECTED RNA POLYMERASE SUBUNIT BETA"/>
    <property type="match status" value="1"/>
</dbReference>
<dbReference type="Pfam" id="PF04997">
    <property type="entry name" value="RNA_pol_Rpb1_1"/>
    <property type="match status" value="1"/>
</dbReference>
<dbReference type="Pfam" id="PF00623">
    <property type="entry name" value="RNA_pol_Rpb1_2"/>
    <property type="match status" value="1"/>
</dbReference>
<dbReference type="Pfam" id="PF04983">
    <property type="entry name" value="RNA_pol_Rpb1_3"/>
    <property type="match status" value="1"/>
</dbReference>
<dbReference type="Pfam" id="PF05000">
    <property type="entry name" value="RNA_pol_Rpb1_4"/>
    <property type="match status" value="1"/>
</dbReference>
<dbReference type="Pfam" id="PF04998">
    <property type="entry name" value="RNA_pol_Rpb1_5"/>
    <property type="match status" value="1"/>
</dbReference>
<dbReference type="SMART" id="SM00663">
    <property type="entry name" value="RPOLA_N"/>
    <property type="match status" value="1"/>
</dbReference>
<dbReference type="SUPFAM" id="SSF64484">
    <property type="entry name" value="beta and beta-prime subunits of DNA dependent RNA-polymerase"/>
    <property type="match status" value="1"/>
</dbReference>
<feature type="chain" id="PRO_1000141781" description="DNA-directed RNA polymerase subunit beta'">
    <location>
        <begin position="1"/>
        <end position="1405"/>
    </location>
</feature>
<feature type="binding site" evidence="1">
    <location>
        <position position="71"/>
    </location>
    <ligand>
        <name>Zn(2+)</name>
        <dbReference type="ChEBI" id="CHEBI:29105"/>
        <label>1</label>
    </ligand>
</feature>
<feature type="binding site" evidence="1">
    <location>
        <position position="73"/>
    </location>
    <ligand>
        <name>Zn(2+)</name>
        <dbReference type="ChEBI" id="CHEBI:29105"/>
        <label>1</label>
    </ligand>
</feature>
<feature type="binding site" evidence="1">
    <location>
        <position position="86"/>
    </location>
    <ligand>
        <name>Zn(2+)</name>
        <dbReference type="ChEBI" id="CHEBI:29105"/>
        <label>1</label>
    </ligand>
</feature>
<feature type="binding site" evidence="1">
    <location>
        <position position="89"/>
    </location>
    <ligand>
        <name>Zn(2+)</name>
        <dbReference type="ChEBI" id="CHEBI:29105"/>
        <label>1</label>
    </ligand>
</feature>
<feature type="binding site" evidence="1">
    <location>
        <position position="462"/>
    </location>
    <ligand>
        <name>Mg(2+)</name>
        <dbReference type="ChEBI" id="CHEBI:18420"/>
    </ligand>
</feature>
<feature type="binding site" evidence="1">
    <location>
        <position position="464"/>
    </location>
    <ligand>
        <name>Mg(2+)</name>
        <dbReference type="ChEBI" id="CHEBI:18420"/>
    </ligand>
</feature>
<feature type="binding site" evidence="1">
    <location>
        <position position="466"/>
    </location>
    <ligand>
        <name>Mg(2+)</name>
        <dbReference type="ChEBI" id="CHEBI:18420"/>
    </ligand>
</feature>
<feature type="binding site" evidence="1">
    <location>
        <position position="820"/>
    </location>
    <ligand>
        <name>Zn(2+)</name>
        <dbReference type="ChEBI" id="CHEBI:29105"/>
        <label>2</label>
    </ligand>
</feature>
<feature type="binding site" evidence="1">
    <location>
        <position position="893"/>
    </location>
    <ligand>
        <name>Zn(2+)</name>
        <dbReference type="ChEBI" id="CHEBI:29105"/>
        <label>2</label>
    </ligand>
</feature>
<feature type="binding site" evidence="1">
    <location>
        <position position="900"/>
    </location>
    <ligand>
        <name>Zn(2+)</name>
        <dbReference type="ChEBI" id="CHEBI:29105"/>
        <label>2</label>
    </ligand>
</feature>
<feature type="binding site" evidence="1">
    <location>
        <position position="903"/>
    </location>
    <ligand>
        <name>Zn(2+)</name>
        <dbReference type="ChEBI" id="CHEBI:29105"/>
        <label>2</label>
    </ligand>
</feature>
<organism>
    <name type="scientific">Methylorubrum populi (strain ATCC BAA-705 / NCIMB 13946 / BJ001)</name>
    <name type="common">Methylobacterium populi</name>
    <dbReference type="NCBI Taxonomy" id="441620"/>
    <lineage>
        <taxon>Bacteria</taxon>
        <taxon>Pseudomonadati</taxon>
        <taxon>Pseudomonadota</taxon>
        <taxon>Alphaproteobacteria</taxon>
        <taxon>Hyphomicrobiales</taxon>
        <taxon>Methylobacteriaceae</taxon>
        <taxon>Methylorubrum</taxon>
    </lineage>
</organism>
<accession>B1ZGS1</accession>
<comment type="function">
    <text evidence="1">DNA-dependent RNA polymerase catalyzes the transcription of DNA into RNA using the four ribonucleoside triphosphates as substrates.</text>
</comment>
<comment type="catalytic activity">
    <reaction evidence="1">
        <text>RNA(n) + a ribonucleoside 5'-triphosphate = RNA(n+1) + diphosphate</text>
        <dbReference type="Rhea" id="RHEA:21248"/>
        <dbReference type="Rhea" id="RHEA-COMP:14527"/>
        <dbReference type="Rhea" id="RHEA-COMP:17342"/>
        <dbReference type="ChEBI" id="CHEBI:33019"/>
        <dbReference type="ChEBI" id="CHEBI:61557"/>
        <dbReference type="ChEBI" id="CHEBI:140395"/>
        <dbReference type="EC" id="2.7.7.6"/>
    </reaction>
</comment>
<comment type="cofactor">
    <cofactor evidence="1">
        <name>Mg(2+)</name>
        <dbReference type="ChEBI" id="CHEBI:18420"/>
    </cofactor>
    <text evidence="1">Binds 1 Mg(2+) ion per subunit.</text>
</comment>
<comment type="cofactor">
    <cofactor evidence="1">
        <name>Zn(2+)</name>
        <dbReference type="ChEBI" id="CHEBI:29105"/>
    </cofactor>
    <text evidence="1">Binds 2 Zn(2+) ions per subunit.</text>
</comment>
<comment type="subunit">
    <text evidence="1">The RNAP catalytic core consists of 2 alpha, 1 beta, 1 beta' and 1 omega subunit. When a sigma factor is associated with the core the holoenzyme is formed, which can initiate transcription.</text>
</comment>
<comment type="similarity">
    <text evidence="1">Belongs to the RNA polymerase beta' chain family.</text>
</comment>
<reference key="1">
    <citation type="submission" date="2008-04" db="EMBL/GenBank/DDBJ databases">
        <title>Complete sequence of chromosome of Methylobacterium populi BJ001.</title>
        <authorList>
            <consortium name="US DOE Joint Genome Institute"/>
            <person name="Copeland A."/>
            <person name="Lucas S."/>
            <person name="Lapidus A."/>
            <person name="Glavina del Rio T."/>
            <person name="Dalin E."/>
            <person name="Tice H."/>
            <person name="Bruce D."/>
            <person name="Goodwin L."/>
            <person name="Pitluck S."/>
            <person name="Chertkov O."/>
            <person name="Brettin T."/>
            <person name="Detter J.C."/>
            <person name="Han C."/>
            <person name="Kuske C.R."/>
            <person name="Schmutz J."/>
            <person name="Larimer F."/>
            <person name="Land M."/>
            <person name="Hauser L."/>
            <person name="Kyrpides N."/>
            <person name="Mikhailova N."/>
            <person name="Marx C."/>
            <person name="Richardson P."/>
        </authorList>
    </citation>
    <scope>NUCLEOTIDE SEQUENCE [LARGE SCALE GENOMIC DNA]</scope>
    <source>
        <strain>ATCC BAA-705 / NCIMB 13946 / BJ001</strain>
    </source>
</reference>
<name>RPOC_METPB</name>
<keyword id="KW-0240">DNA-directed RNA polymerase</keyword>
<keyword id="KW-0460">Magnesium</keyword>
<keyword id="KW-0479">Metal-binding</keyword>
<keyword id="KW-0548">Nucleotidyltransferase</keyword>
<keyword id="KW-0804">Transcription</keyword>
<keyword id="KW-0808">Transferase</keyword>
<keyword id="KW-0862">Zinc</keyword>
<proteinExistence type="inferred from homology"/>